<gene>
    <name type="primary">MT-ATP8</name>
    <name type="synonym">ATP8</name>
    <name type="synonym">ATPASE8</name>
    <name type="synonym">MTATP8</name>
</gene>
<keyword id="KW-0066">ATP synthesis</keyword>
<keyword id="KW-0138">CF(0)</keyword>
<keyword id="KW-0375">Hydrogen ion transport</keyword>
<keyword id="KW-0406">Ion transport</keyword>
<keyword id="KW-0472">Membrane</keyword>
<keyword id="KW-0496">Mitochondrion</keyword>
<keyword id="KW-0812">Transmembrane</keyword>
<keyword id="KW-1133">Transmembrane helix</keyword>
<keyword id="KW-0813">Transport</keyword>
<name>ATP8_SQUAC</name>
<accession>Q9ZZ50</accession>
<geneLocation type="mitochondrion"/>
<protein>
    <recommendedName>
        <fullName>ATP synthase protein 8</fullName>
    </recommendedName>
    <alternativeName>
        <fullName>A6L</fullName>
    </alternativeName>
    <alternativeName>
        <fullName>F-ATPase subunit 8</fullName>
    </alternativeName>
</protein>
<proteinExistence type="inferred from homology"/>
<reference key="1">
    <citation type="journal article" date="1999" name="J. Mol. Evol.">
        <title>Phylogenetic studies of complete mitochondrial DNA molecules place cartilaginous fishes within the tree of bony fishes.</title>
        <authorList>
            <person name="Rasmussen A.S."/>
            <person name="Arnason U."/>
        </authorList>
    </citation>
    <scope>NUCLEOTIDE SEQUENCE [GENOMIC DNA]</scope>
</reference>
<dbReference type="EMBL" id="Y18134">
    <property type="protein sequence ID" value="CAA77053.1"/>
    <property type="molecule type" value="Genomic_DNA"/>
</dbReference>
<dbReference type="PIR" id="T11538">
    <property type="entry name" value="T11538"/>
</dbReference>
<dbReference type="RefSeq" id="NP_008527.1">
    <property type="nucleotide sequence ID" value="NC_002012.1"/>
</dbReference>
<dbReference type="SMR" id="Q9ZZ50"/>
<dbReference type="GeneID" id="808376"/>
<dbReference type="CTD" id="4509"/>
<dbReference type="GO" id="GO:0031966">
    <property type="term" value="C:mitochondrial membrane"/>
    <property type="evidence" value="ECO:0007669"/>
    <property type="project" value="UniProtKB-SubCell"/>
</dbReference>
<dbReference type="GO" id="GO:0045259">
    <property type="term" value="C:proton-transporting ATP synthase complex"/>
    <property type="evidence" value="ECO:0007669"/>
    <property type="project" value="UniProtKB-KW"/>
</dbReference>
<dbReference type="GO" id="GO:0015078">
    <property type="term" value="F:proton transmembrane transporter activity"/>
    <property type="evidence" value="ECO:0007669"/>
    <property type="project" value="InterPro"/>
</dbReference>
<dbReference type="GO" id="GO:0015986">
    <property type="term" value="P:proton motive force-driven ATP synthesis"/>
    <property type="evidence" value="ECO:0007669"/>
    <property type="project" value="InterPro"/>
</dbReference>
<dbReference type="InterPro" id="IPR001421">
    <property type="entry name" value="ATP8_metazoa"/>
</dbReference>
<dbReference type="InterPro" id="IPR050635">
    <property type="entry name" value="ATPase_protein_8"/>
</dbReference>
<dbReference type="PANTHER" id="PTHR39937">
    <property type="entry name" value="ATP SYNTHASE PROTEIN 8"/>
    <property type="match status" value="1"/>
</dbReference>
<dbReference type="PANTHER" id="PTHR39937:SF1">
    <property type="entry name" value="ATP SYNTHASE PROTEIN 8"/>
    <property type="match status" value="1"/>
</dbReference>
<dbReference type="Pfam" id="PF00895">
    <property type="entry name" value="ATP-synt_8"/>
    <property type="match status" value="1"/>
</dbReference>
<feature type="chain" id="PRO_0000195588" description="ATP synthase protein 8">
    <location>
        <begin position="1"/>
        <end position="55"/>
    </location>
</feature>
<feature type="transmembrane region" description="Helical" evidence="2">
    <location>
        <begin position="6"/>
        <end position="26"/>
    </location>
</feature>
<organism>
    <name type="scientific">Squalus acanthias</name>
    <name type="common">Spiny dogfish</name>
    <dbReference type="NCBI Taxonomy" id="7797"/>
    <lineage>
        <taxon>Eukaryota</taxon>
        <taxon>Metazoa</taxon>
        <taxon>Chordata</taxon>
        <taxon>Craniata</taxon>
        <taxon>Vertebrata</taxon>
        <taxon>Chondrichthyes</taxon>
        <taxon>Elasmobranchii</taxon>
        <taxon>Squalomorphii</taxon>
        <taxon>Squaliformes</taxon>
        <taxon>Squalidae</taxon>
        <taxon>Squalus</taxon>
    </lineage>
</organism>
<evidence type="ECO:0000250" key="1"/>
<evidence type="ECO:0000255" key="2"/>
<evidence type="ECO:0000305" key="3"/>
<comment type="function">
    <text evidence="1">Mitochondrial membrane ATP synthase (F(1)F(0) ATP synthase or Complex V) produces ATP from ADP in the presence of a proton gradient across the membrane which is generated by electron transport complexes of the respiratory chain. F-type ATPases consist of two structural domains, F(1) - containing the extramembraneous catalytic core and F(0) - containing the membrane proton channel, linked together by a central stalk and a peripheral stalk. During catalysis, ATP synthesis in the catalytic domain of F(1) is coupled via a rotary mechanism of the central stalk subunits to proton translocation. Part of the complex F(0) domain. Minor subunit located with subunit a in the membrane (By similarity).</text>
</comment>
<comment type="subunit">
    <text evidence="1">F-type ATPases have 2 components, CF(1) - the catalytic core - and CF(0) - the membrane proton channel.</text>
</comment>
<comment type="subcellular location">
    <subcellularLocation>
        <location>Mitochondrion membrane</location>
        <topology>Single-pass membrane protein</topology>
    </subcellularLocation>
</comment>
<comment type="similarity">
    <text evidence="3">Belongs to the ATPase protein 8 family.</text>
</comment>
<sequence>MPQLNPHPWFAILVFSWIFFLVILPKKVMTHLFNNNPTAKSAEKPKPEPWNWPWT</sequence>